<dbReference type="EC" id="1.5.1.5" evidence="1"/>
<dbReference type="EC" id="3.5.4.9" evidence="1"/>
<dbReference type="EMBL" id="AE003849">
    <property type="protein sequence ID" value="AAF85230.1"/>
    <property type="molecule type" value="Genomic_DNA"/>
</dbReference>
<dbReference type="PIR" id="C82558">
    <property type="entry name" value="C82558"/>
</dbReference>
<dbReference type="SMR" id="Q9PAR4"/>
<dbReference type="STRING" id="160492.XF_2431"/>
<dbReference type="KEGG" id="xfa:XF_2431"/>
<dbReference type="eggNOG" id="COG0190">
    <property type="taxonomic scope" value="Bacteria"/>
</dbReference>
<dbReference type="HOGENOM" id="CLU_034045_2_1_6"/>
<dbReference type="UniPathway" id="UPA00193"/>
<dbReference type="Proteomes" id="UP000000812">
    <property type="component" value="Chromosome"/>
</dbReference>
<dbReference type="GO" id="GO:0005829">
    <property type="term" value="C:cytosol"/>
    <property type="evidence" value="ECO:0007669"/>
    <property type="project" value="TreeGrafter"/>
</dbReference>
<dbReference type="GO" id="GO:0004477">
    <property type="term" value="F:methenyltetrahydrofolate cyclohydrolase activity"/>
    <property type="evidence" value="ECO:0007669"/>
    <property type="project" value="UniProtKB-UniRule"/>
</dbReference>
<dbReference type="GO" id="GO:0004488">
    <property type="term" value="F:methylenetetrahydrofolate dehydrogenase (NADP+) activity"/>
    <property type="evidence" value="ECO:0007669"/>
    <property type="project" value="UniProtKB-UniRule"/>
</dbReference>
<dbReference type="GO" id="GO:0000105">
    <property type="term" value="P:L-histidine biosynthetic process"/>
    <property type="evidence" value="ECO:0007669"/>
    <property type="project" value="UniProtKB-KW"/>
</dbReference>
<dbReference type="GO" id="GO:0009086">
    <property type="term" value="P:methionine biosynthetic process"/>
    <property type="evidence" value="ECO:0007669"/>
    <property type="project" value="UniProtKB-KW"/>
</dbReference>
<dbReference type="GO" id="GO:0006164">
    <property type="term" value="P:purine nucleotide biosynthetic process"/>
    <property type="evidence" value="ECO:0007669"/>
    <property type="project" value="UniProtKB-KW"/>
</dbReference>
<dbReference type="GO" id="GO:0035999">
    <property type="term" value="P:tetrahydrofolate interconversion"/>
    <property type="evidence" value="ECO:0007669"/>
    <property type="project" value="UniProtKB-UniRule"/>
</dbReference>
<dbReference type="CDD" id="cd01080">
    <property type="entry name" value="NAD_bind_m-THF_DH_Cyclohyd"/>
    <property type="match status" value="1"/>
</dbReference>
<dbReference type="FunFam" id="3.40.50.720:FF:000006">
    <property type="entry name" value="Bifunctional protein FolD"/>
    <property type="match status" value="1"/>
</dbReference>
<dbReference type="FunFam" id="3.40.50.10860:FF:000005">
    <property type="entry name" value="C-1-tetrahydrofolate synthase, cytoplasmic, putative"/>
    <property type="match status" value="1"/>
</dbReference>
<dbReference type="Gene3D" id="3.40.50.10860">
    <property type="entry name" value="Leucine Dehydrogenase, chain A, domain 1"/>
    <property type="match status" value="1"/>
</dbReference>
<dbReference type="Gene3D" id="3.40.50.720">
    <property type="entry name" value="NAD(P)-binding Rossmann-like Domain"/>
    <property type="match status" value="1"/>
</dbReference>
<dbReference type="HAMAP" id="MF_01576">
    <property type="entry name" value="THF_DHG_CYH"/>
    <property type="match status" value="1"/>
</dbReference>
<dbReference type="InterPro" id="IPR046346">
    <property type="entry name" value="Aminoacid_DH-like_N_sf"/>
</dbReference>
<dbReference type="InterPro" id="IPR036291">
    <property type="entry name" value="NAD(P)-bd_dom_sf"/>
</dbReference>
<dbReference type="InterPro" id="IPR000672">
    <property type="entry name" value="THF_DH/CycHdrlase"/>
</dbReference>
<dbReference type="InterPro" id="IPR020630">
    <property type="entry name" value="THF_DH/CycHdrlase_cat_dom"/>
</dbReference>
<dbReference type="InterPro" id="IPR020867">
    <property type="entry name" value="THF_DH/CycHdrlase_CS"/>
</dbReference>
<dbReference type="InterPro" id="IPR020631">
    <property type="entry name" value="THF_DH/CycHdrlase_NAD-bd_dom"/>
</dbReference>
<dbReference type="NCBIfam" id="NF008058">
    <property type="entry name" value="PRK10792.1"/>
    <property type="match status" value="1"/>
</dbReference>
<dbReference type="PANTHER" id="PTHR48099:SF5">
    <property type="entry name" value="C-1-TETRAHYDROFOLATE SYNTHASE, CYTOPLASMIC"/>
    <property type="match status" value="1"/>
</dbReference>
<dbReference type="PANTHER" id="PTHR48099">
    <property type="entry name" value="C-1-TETRAHYDROFOLATE SYNTHASE, CYTOPLASMIC-RELATED"/>
    <property type="match status" value="1"/>
</dbReference>
<dbReference type="Pfam" id="PF00763">
    <property type="entry name" value="THF_DHG_CYH"/>
    <property type="match status" value="1"/>
</dbReference>
<dbReference type="Pfam" id="PF02882">
    <property type="entry name" value="THF_DHG_CYH_C"/>
    <property type="match status" value="1"/>
</dbReference>
<dbReference type="PRINTS" id="PR00085">
    <property type="entry name" value="THFDHDRGNASE"/>
</dbReference>
<dbReference type="SUPFAM" id="SSF53223">
    <property type="entry name" value="Aminoacid dehydrogenase-like, N-terminal domain"/>
    <property type="match status" value="1"/>
</dbReference>
<dbReference type="SUPFAM" id="SSF51735">
    <property type="entry name" value="NAD(P)-binding Rossmann-fold domains"/>
    <property type="match status" value="1"/>
</dbReference>
<dbReference type="PROSITE" id="PS00767">
    <property type="entry name" value="THF_DHG_CYH_2"/>
    <property type="match status" value="1"/>
</dbReference>
<organism>
    <name type="scientific">Xylella fastidiosa (strain 9a5c)</name>
    <dbReference type="NCBI Taxonomy" id="160492"/>
    <lineage>
        <taxon>Bacteria</taxon>
        <taxon>Pseudomonadati</taxon>
        <taxon>Pseudomonadota</taxon>
        <taxon>Gammaproteobacteria</taxon>
        <taxon>Lysobacterales</taxon>
        <taxon>Lysobacteraceae</taxon>
        <taxon>Xylella</taxon>
    </lineage>
</organism>
<accession>Q9PAR4</accession>
<protein>
    <recommendedName>
        <fullName evidence="1">Bifunctional protein FolD</fullName>
    </recommendedName>
    <domain>
        <recommendedName>
            <fullName evidence="1">Methylenetetrahydrofolate dehydrogenase</fullName>
            <ecNumber evidence="1">1.5.1.5</ecNumber>
        </recommendedName>
    </domain>
    <domain>
        <recommendedName>
            <fullName evidence="1">Methenyltetrahydrofolate cyclohydrolase</fullName>
            <ecNumber evidence="1">3.5.4.9</ecNumber>
        </recommendedName>
    </domain>
</protein>
<reference key="1">
    <citation type="journal article" date="2000" name="Nature">
        <title>The genome sequence of the plant pathogen Xylella fastidiosa.</title>
        <authorList>
            <person name="Simpson A.J.G."/>
            <person name="Reinach F.C."/>
            <person name="Arruda P."/>
            <person name="Abreu F.A."/>
            <person name="Acencio M."/>
            <person name="Alvarenga R."/>
            <person name="Alves L.M.C."/>
            <person name="Araya J.E."/>
            <person name="Baia G.S."/>
            <person name="Baptista C.S."/>
            <person name="Barros M.H."/>
            <person name="Bonaccorsi E.D."/>
            <person name="Bordin S."/>
            <person name="Bove J.M."/>
            <person name="Briones M.R.S."/>
            <person name="Bueno M.R.P."/>
            <person name="Camargo A.A."/>
            <person name="Camargo L.E.A."/>
            <person name="Carraro D.M."/>
            <person name="Carrer H."/>
            <person name="Colauto N.B."/>
            <person name="Colombo C."/>
            <person name="Costa F.F."/>
            <person name="Costa M.C.R."/>
            <person name="Costa-Neto C.M."/>
            <person name="Coutinho L.L."/>
            <person name="Cristofani M."/>
            <person name="Dias-Neto E."/>
            <person name="Docena C."/>
            <person name="El-Dorry H."/>
            <person name="Facincani A.P."/>
            <person name="Ferreira A.J.S."/>
            <person name="Ferreira V.C.A."/>
            <person name="Ferro J.A."/>
            <person name="Fraga J.S."/>
            <person name="Franca S.C."/>
            <person name="Franco M.C."/>
            <person name="Frohme M."/>
            <person name="Furlan L.R."/>
            <person name="Garnier M."/>
            <person name="Goldman G.H."/>
            <person name="Goldman M.H.S."/>
            <person name="Gomes S.L."/>
            <person name="Gruber A."/>
            <person name="Ho P.L."/>
            <person name="Hoheisel J.D."/>
            <person name="Junqueira M.L."/>
            <person name="Kemper E.L."/>
            <person name="Kitajima J.P."/>
            <person name="Krieger J.E."/>
            <person name="Kuramae E.E."/>
            <person name="Laigret F."/>
            <person name="Lambais M.R."/>
            <person name="Leite L.C.C."/>
            <person name="Lemos E.G.M."/>
            <person name="Lemos M.V.F."/>
            <person name="Lopes S.A."/>
            <person name="Lopes C.R."/>
            <person name="Machado J.A."/>
            <person name="Machado M.A."/>
            <person name="Madeira A.M.B.N."/>
            <person name="Madeira H.M.F."/>
            <person name="Marino C.L."/>
            <person name="Marques M.V."/>
            <person name="Martins E.A.L."/>
            <person name="Martins E.M.F."/>
            <person name="Matsukuma A.Y."/>
            <person name="Menck C.F.M."/>
            <person name="Miracca E.C."/>
            <person name="Miyaki C.Y."/>
            <person name="Monteiro-Vitorello C.B."/>
            <person name="Moon D.H."/>
            <person name="Nagai M.A."/>
            <person name="Nascimento A.L.T.O."/>
            <person name="Netto L.E.S."/>
            <person name="Nhani A. Jr."/>
            <person name="Nobrega F.G."/>
            <person name="Nunes L.R."/>
            <person name="Oliveira M.A."/>
            <person name="de Oliveira M.C."/>
            <person name="de Oliveira R.C."/>
            <person name="Palmieri D.A."/>
            <person name="Paris A."/>
            <person name="Peixoto B.R."/>
            <person name="Pereira G.A.G."/>
            <person name="Pereira H.A. Jr."/>
            <person name="Pesquero J.B."/>
            <person name="Quaggio R.B."/>
            <person name="Roberto P.G."/>
            <person name="Rodrigues V."/>
            <person name="de Rosa A.J.M."/>
            <person name="de Rosa V.E. Jr."/>
            <person name="de Sa R.G."/>
            <person name="Santelli R.V."/>
            <person name="Sawasaki H.E."/>
            <person name="da Silva A.C.R."/>
            <person name="da Silva A.M."/>
            <person name="da Silva F.R."/>
            <person name="Silva W.A. Jr."/>
            <person name="da Silveira J.F."/>
            <person name="Silvestri M.L.Z."/>
            <person name="Siqueira W.J."/>
            <person name="de Souza A.A."/>
            <person name="de Souza A.P."/>
            <person name="Terenzi M.F."/>
            <person name="Truffi D."/>
            <person name="Tsai S.M."/>
            <person name="Tsuhako M.H."/>
            <person name="Vallada H."/>
            <person name="Van Sluys M.A."/>
            <person name="Verjovski-Almeida S."/>
            <person name="Vettore A.L."/>
            <person name="Zago M.A."/>
            <person name="Zatz M."/>
            <person name="Meidanis J."/>
            <person name="Setubal J.C."/>
        </authorList>
    </citation>
    <scope>NUCLEOTIDE SEQUENCE [LARGE SCALE GENOMIC DNA]</scope>
    <source>
        <strain>9a5c</strain>
    </source>
</reference>
<sequence length="295" mass="31431">MIVSMLAATDLARILDGRRIADDLLDALKTRVDARVAAGKLPPTLAVVLVGSDPASVVYVRNKRRAAEKVGIKAYDFDLPEATTEAELAALIDRLNADPKIHGILIQLPLPGIPDAHRLIQRVDPRKDVDGFHPQNVGHLALREFGLRPCTPRGIVTLLGHTDRPVRGRNATIVGVSNHVGRPMGLELLMAGCTVTSCHKFTPPQMLEAAVRQADILIVAVGRPGVIPGEWVKPGAVVIDVGINRLDDGRLVGDVGFESAVKRASWITPVPGGVGPMTVATLMQNTLEAAEAADC</sequence>
<name>FOLD_XYLFA</name>
<proteinExistence type="inferred from homology"/>
<evidence type="ECO:0000255" key="1">
    <source>
        <dbReference type="HAMAP-Rule" id="MF_01576"/>
    </source>
</evidence>
<feature type="chain" id="PRO_0000268571" description="Bifunctional protein FolD">
    <location>
        <begin position="1"/>
        <end position="295"/>
    </location>
</feature>
<feature type="binding site" evidence="1">
    <location>
        <begin position="175"/>
        <end position="177"/>
    </location>
    <ligand>
        <name>NADP(+)</name>
        <dbReference type="ChEBI" id="CHEBI:58349"/>
    </ligand>
</feature>
<feature type="binding site" evidence="1">
    <location>
        <position position="243"/>
    </location>
    <ligand>
        <name>NADP(+)</name>
        <dbReference type="ChEBI" id="CHEBI:58349"/>
    </ligand>
</feature>
<comment type="function">
    <text evidence="1">Catalyzes the oxidation of 5,10-methylenetetrahydrofolate to 5,10-methenyltetrahydrofolate and then the hydrolysis of 5,10-methenyltetrahydrofolate to 10-formyltetrahydrofolate.</text>
</comment>
<comment type="catalytic activity">
    <reaction evidence="1">
        <text>(6R)-5,10-methylene-5,6,7,8-tetrahydrofolate + NADP(+) = (6R)-5,10-methenyltetrahydrofolate + NADPH</text>
        <dbReference type="Rhea" id="RHEA:22812"/>
        <dbReference type="ChEBI" id="CHEBI:15636"/>
        <dbReference type="ChEBI" id="CHEBI:57455"/>
        <dbReference type="ChEBI" id="CHEBI:57783"/>
        <dbReference type="ChEBI" id="CHEBI:58349"/>
        <dbReference type="EC" id="1.5.1.5"/>
    </reaction>
</comment>
<comment type="catalytic activity">
    <reaction evidence="1">
        <text>(6R)-5,10-methenyltetrahydrofolate + H2O = (6R)-10-formyltetrahydrofolate + H(+)</text>
        <dbReference type="Rhea" id="RHEA:23700"/>
        <dbReference type="ChEBI" id="CHEBI:15377"/>
        <dbReference type="ChEBI" id="CHEBI:15378"/>
        <dbReference type="ChEBI" id="CHEBI:57455"/>
        <dbReference type="ChEBI" id="CHEBI:195366"/>
        <dbReference type="EC" id="3.5.4.9"/>
    </reaction>
</comment>
<comment type="pathway">
    <text evidence="1">One-carbon metabolism; tetrahydrofolate interconversion.</text>
</comment>
<comment type="subunit">
    <text evidence="1">Homodimer.</text>
</comment>
<comment type="similarity">
    <text evidence="1">Belongs to the tetrahydrofolate dehydrogenase/cyclohydrolase family.</text>
</comment>
<gene>
    <name evidence="1" type="primary">folD</name>
    <name type="ordered locus">XF_2431</name>
</gene>
<keyword id="KW-0028">Amino-acid biosynthesis</keyword>
<keyword id="KW-0368">Histidine biosynthesis</keyword>
<keyword id="KW-0378">Hydrolase</keyword>
<keyword id="KW-0486">Methionine biosynthesis</keyword>
<keyword id="KW-0511">Multifunctional enzyme</keyword>
<keyword id="KW-0521">NADP</keyword>
<keyword id="KW-0554">One-carbon metabolism</keyword>
<keyword id="KW-0560">Oxidoreductase</keyword>
<keyword id="KW-0658">Purine biosynthesis</keyword>